<proteinExistence type="inferred from homology"/>
<evidence type="ECO:0000255" key="1">
    <source>
        <dbReference type="HAMAP-Rule" id="MF_03112"/>
    </source>
</evidence>
<reference key="1">
    <citation type="journal article" date="2007" name="Nature">
        <title>Evolution of genes and genomes on the Drosophila phylogeny.</title>
        <authorList>
            <consortium name="Drosophila 12 genomes consortium"/>
        </authorList>
    </citation>
    <scope>NUCLEOTIDE SEQUENCE [LARGE SCALE GENOMIC DNA]</scope>
    <source>
        <strain>MSH-3 / Tucson 14011-0111.49</strain>
    </source>
</reference>
<gene>
    <name type="ORF">GL20106</name>
</gene>
<sequence length="336" mass="37539">MVDNLEPLPASLQNLVEQDSLKWIFVGGKGGVGKTTCSSSLAVQLAKVRESVLIISTDPAHNISDAFDQKFTKVPTKVNGFDNLFAMEIDPNAGLNELPEEYFEGENEALRVSKGVMQEMINALPGIDEAMSYAEVMKLVKGMNFSVVVFDTAPTGHTLRLIAFPQVVEKGLGKLLRLKMKVAPLLTQFVSMLGMADVNVDTLSQKLDDMLRVITQVNEQFKNPDQTTFVCVCIAEFFSLYETERLIQELTKCGIDVHNIIVNQLLFLNNSHSSCKMCASRYKIQEKYLDQIADLYEDFHVTKLPLLEKEVRGPDSIKAFSENLMTPYDPKAKSKE</sequence>
<name>ASNA_DROPE</name>
<protein>
    <recommendedName>
        <fullName evidence="1">ATPase ASNA1 homolog</fullName>
        <ecNumber evidence="1">3.6.-.-</ecNumber>
    </recommendedName>
    <alternativeName>
        <fullName evidence="1">Arsenical pump-driving ATPase homolog</fullName>
    </alternativeName>
    <alternativeName>
        <fullName evidence="1">Arsenite-stimulated ATPase</fullName>
    </alternativeName>
</protein>
<keyword id="KW-0067">ATP-binding</keyword>
<keyword id="KW-0963">Cytoplasm</keyword>
<keyword id="KW-0256">Endoplasmic reticulum</keyword>
<keyword id="KW-0378">Hydrolase</keyword>
<keyword id="KW-0479">Metal-binding</keyword>
<keyword id="KW-0547">Nucleotide-binding</keyword>
<keyword id="KW-1185">Reference proteome</keyword>
<keyword id="KW-0813">Transport</keyword>
<keyword id="KW-0862">Zinc</keyword>
<dbReference type="EC" id="3.6.-.-" evidence="1"/>
<dbReference type="EMBL" id="CH479223">
    <property type="protein sequence ID" value="EDW35030.1"/>
    <property type="molecule type" value="Genomic_DNA"/>
</dbReference>
<dbReference type="SMR" id="B4H8J5"/>
<dbReference type="STRING" id="7234.B4H8J5"/>
<dbReference type="EnsemblMetazoa" id="FBtr0185721">
    <property type="protein sequence ID" value="FBpp0184213"/>
    <property type="gene ID" value="FBgn0157701"/>
</dbReference>
<dbReference type="EnsemblMetazoa" id="XM_002027138.2">
    <property type="protein sequence ID" value="XP_002027174.1"/>
    <property type="gene ID" value="LOC6602068"/>
</dbReference>
<dbReference type="GeneID" id="6602068"/>
<dbReference type="KEGG" id="dpe:6602068"/>
<dbReference type="eggNOG" id="KOG2825">
    <property type="taxonomic scope" value="Eukaryota"/>
</dbReference>
<dbReference type="HOGENOM" id="CLU_040761_0_0_1"/>
<dbReference type="OMA" id="MDAPYEF"/>
<dbReference type="OrthoDB" id="1770at2759"/>
<dbReference type="PhylomeDB" id="B4H8J5"/>
<dbReference type="Proteomes" id="UP000008744">
    <property type="component" value="Unassembled WGS sequence"/>
</dbReference>
<dbReference type="GO" id="GO:0043529">
    <property type="term" value="C:GET complex"/>
    <property type="evidence" value="ECO:0007669"/>
    <property type="project" value="TreeGrafter"/>
</dbReference>
<dbReference type="GO" id="GO:0005524">
    <property type="term" value="F:ATP binding"/>
    <property type="evidence" value="ECO:0007669"/>
    <property type="project" value="UniProtKB-UniRule"/>
</dbReference>
<dbReference type="GO" id="GO:0016887">
    <property type="term" value="F:ATP hydrolysis activity"/>
    <property type="evidence" value="ECO:0007669"/>
    <property type="project" value="InterPro"/>
</dbReference>
<dbReference type="GO" id="GO:0046872">
    <property type="term" value="F:metal ion binding"/>
    <property type="evidence" value="ECO:0007669"/>
    <property type="project" value="UniProtKB-KW"/>
</dbReference>
<dbReference type="GO" id="GO:0071816">
    <property type="term" value="P:tail-anchored membrane protein insertion into ER membrane"/>
    <property type="evidence" value="ECO:0007669"/>
    <property type="project" value="TreeGrafter"/>
</dbReference>
<dbReference type="CDD" id="cd02035">
    <property type="entry name" value="ArsA"/>
    <property type="match status" value="1"/>
</dbReference>
<dbReference type="FunFam" id="3.40.50.300:FF:000235">
    <property type="entry name" value="ATPase ASNA1"/>
    <property type="match status" value="1"/>
</dbReference>
<dbReference type="Gene3D" id="3.40.50.300">
    <property type="entry name" value="P-loop containing nucleotide triphosphate hydrolases"/>
    <property type="match status" value="1"/>
</dbReference>
<dbReference type="HAMAP" id="MF_03112">
    <property type="entry name" value="Asna1_Get3"/>
    <property type="match status" value="1"/>
</dbReference>
<dbReference type="InterPro" id="IPR025723">
    <property type="entry name" value="Anion-transp_ATPase-like_dom"/>
</dbReference>
<dbReference type="InterPro" id="IPR016300">
    <property type="entry name" value="ATPase_ArsA/GET3"/>
</dbReference>
<dbReference type="InterPro" id="IPR027542">
    <property type="entry name" value="ATPase_ArsA/GET3_euk"/>
</dbReference>
<dbReference type="InterPro" id="IPR027417">
    <property type="entry name" value="P-loop_NTPase"/>
</dbReference>
<dbReference type="NCBIfam" id="TIGR00345">
    <property type="entry name" value="GET3_arsA_TRC40"/>
    <property type="match status" value="1"/>
</dbReference>
<dbReference type="PANTHER" id="PTHR10803">
    <property type="entry name" value="ARSENICAL PUMP-DRIVING ATPASE ARSENITE-TRANSLOCATING ATPASE"/>
    <property type="match status" value="1"/>
</dbReference>
<dbReference type="PANTHER" id="PTHR10803:SF3">
    <property type="entry name" value="ATPASE GET3"/>
    <property type="match status" value="1"/>
</dbReference>
<dbReference type="Pfam" id="PF02374">
    <property type="entry name" value="ArsA_ATPase"/>
    <property type="match status" value="1"/>
</dbReference>
<dbReference type="SUPFAM" id="SSF52540">
    <property type="entry name" value="P-loop containing nucleoside triphosphate hydrolases"/>
    <property type="match status" value="1"/>
</dbReference>
<comment type="function">
    <text evidence="1">ATPase required for the post-translational delivery of tail-anchored (TA) proteins to the endoplasmic reticulum. Recognizes and selectively binds the transmembrane domain of TA proteins in the cytosol. This complex then targets to the endoplasmic reticulum by membrane-bound receptors, where the tail-anchored protein is released for insertion. This process is regulated by ATP binding and hydrolysis. ATP binding drives the homodimer towards the closed dimer state, facilitating recognition of newly synthesized TA membrane proteins. ATP hydrolysis is required for insertion. Subsequently, the homodimer reverts towards the open dimer state, lowering its affinity for the membrane-bound receptor, and returning it to the cytosol to initiate a new round of targeting.</text>
</comment>
<comment type="subunit">
    <text evidence="1">Homodimer.</text>
</comment>
<comment type="subcellular location">
    <subcellularLocation>
        <location evidence="1">Cytoplasm</location>
    </subcellularLocation>
    <subcellularLocation>
        <location evidence="1">Endoplasmic reticulum</location>
    </subcellularLocation>
</comment>
<comment type="similarity">
    <text evidence="1">Belongs to the arsA ATPase family.</text>
</comment>
<organism>
    <name type="scientific">Drosophila persimilis</name>
    <name type="common">Fruit fly</name>
    <dbReference type="NCBI Taxonomy" id="7234"/>
    <lineage>
        <taxon>Eukaryota</taxon>
        <taxon>Metazoa</taxon>
        <taxon>Ecdysozoa</taxon>
        <taxon>Arthropoda</taxon>
        <taxon>Hexapoda</taxon>
        <taxon>Insecta</taxon>
        <taxon>Pterygota</taxon>
        <taxon>Neoptera</taxon>
        <taxon>Endopterygota</taxon>
        <taxon>Diptera</taxon>
        <taxon>Brachycera</taxon>
        <taxon>Muscomorpha</taxon>
        <taxon>Ephydroidea</taxon>
        <taxon>Drosophilidae</taxon>
        <taxon>Drosophila</taxon>
        <taxon>Sophophora</taxon>
    </lineage>
</organism>
<accession>B4H8J5</accession>
<feature type="chain" id="PRO_0000388153" description="ATPase ASNA1 homolog">
    <location>
        <begin position="1"/>
        <end position="336"/>
    </location>
</feature>
<feature type="active site" evidence="1">
    <location>
        <position position="58"/>
    </location>
</feature>
<feature type="binding site" evidence="1">
    <location>
        <begin position="29"/>
        <end position="36"/>
    </location>
    <ligand>
        <name>ATP</name>
        <dbReference type="ChEBI" id="CHEBI:30616"/>
    </ligand>
</feature>
<feature type="binding site" evidence="1">
    <location>
        <position position="236"/>
    </location>
    <ligand>
        <name>ATP</name>
        <dbReference type="ChEBI" id="CHEBI:30616"/>
    </ligand>
</feature>
<feature type="binding site" evidence="1">
    <location>
        <position position="263"/>
    </location>
    <ligand>
        <name>ATP</name>
        <dbReference type="ChEBI" id="CHEBI:30616"/>
    </ligand>
</feature>
<feature type="binding site" evidence="1">
    <location>
        <position position="275"/>
    </location>
    <ligand>
        <name>Zn(2+)</name>
        <dbReference type="ChEBI" id="CHEBI:29105"/>
        <note>ligand shared between dimeric partners</note>
    </ligand>
</feature>
<feature type="binding site" evidence="1">
    <location>
        <position position="278"/>
    </location>
    <ligand>
        <name>Zn(2+)</name>
        <dbReference type="ChEBI" id="CHEBI:29105"/>
        <note>ligand shared between dimeric partners</note>
    </ligand>
</feature>